<evidence type="ECO:0000250" key="1"/>
<evidence type="ECO:0000255" key="2"/>
<evidence type="ECO:0000256" key="3">
    <source>
        <dbReference type="SAM" id="MobiDB-lite"/>
    </source>
</evidence>
<evidence type="ECO:0000305" key="4"/>
<sequence length="733" mass="80394">MTSHDVRDVLNLPSDHAGPRPSKKARTATPRPNLKGLAREVQNLGGDNPIAIVPEVSIFKKRRTVSRKPAAKWELKAFTNSARGDDGALVLRHWKRKPDGTVQDGSAEGQDSAATADNSADKPEDSSFAKFNVRVSVPQYSEDQYNTNLKHPDWTKEETDYLLELAKDFDLRWPIIWDRYEYAPQQPEGETPDGMAVVPASKPRTMEDLKARYYEVAAKMMAVQKPAQYMTRPEFELYEMMLHFDPKQEQNRKRFAENTLKRSSDEAREEEALLLEIKRIMARTERFNEERRELYNRLDYPASESDINSFKTSAGLQSLLQTLLNVDKSKKRKSIMAPENGVPPAAAAAAATAALPPAAAAVAAAPEVPPAASRRESLAASSTAGANDHHEPPVREPPVRHERQESRSHHRNESRSERADRHGAHGHHHRDSVSQTPATPAEAPTPVPAPAPAANKKKGPQQPERRKLSEHEEQVYGVSHHDRLGSGPTFRYEKINKLYSHKSGQQQMRITNLLLELDIPARLIMPTAAVTAQFEVLWGAVTTLVDLRKMSDKVDAEIKLEEAKKAERERAAREAAEARGETVEKKGGEEEGEGGGADDKQKDGGGAGGDDAKDKSGESAQADEQKNDQKAEDAKAQKEQQGEGQDQQKKGEEGLVVPIKEGGGEKGQGDAAAAATAAEKEAESSSNQPKIKEEADENGSSSGAGASSGARQHKRSASVLSNASDKSTKKQKK</sequence>
<dbReference type="EMBL" id="BX295540">
    <property type="protein sequence ID" value="CAD79677.1"/>
    <property type="status" value="ALT_SEQ"/>
    <property type="molecule type" value="Genomic_DNA"/>
</dbReference>
<dbReference type="EMBL" id="CM002241">
    <property type="protein sequence ID" value="EAA28381.2"/>
    <property type="molecule type" value="Genomic_DNA"/>
</dbReference>
<dbReference type="RefSeq" id="XP_957617.2">
    <property type="nucleotide sequence ID" value="XM_952524.3"/>
</dbReference>
<dbReference type="SMR" id="Q870Q1"/>
<dbReference type="FunCoup" id="Q870Q1">
    <property type="interactions" value="909"/>
</dbReference>
<dbReference type="STRING" id="367110.Q870Q1"/>
<dbReference type="PaxDb" id="5141-EFNCRP00000003699"/>
<dbReference type="EnsemblFungi" id="EAA28381">
    <property type="protein sequence ID" value="EAA28381"/>
    <property type="gene ID" value="NCU04002"/>
</dbReference>
<dbReference type="GeneID" id="3873788"/>
<dbReference type="KEGG" id="ncr:NCU04002"/>
<dbReference type="VEuPathDB" id="FungiDB:NCU04002"/>
<dbReference type="HOGENOM" id="CLU_018539_3_1_1"/>
<dbReference type="InParanoid" id="Q870Q1"/>
<dbReference type="OMA" id="GNTTMYQ"/>
<dbReference type="OrthoDB" id="19740at2759"/>
<dbReference type="Proteomes" id="UP000001805">
    <property type="component" value="Chromosome 5, Linkage Group VI"/>
</dbReference>
<dbReference type="GO" id="GO:0035267">
    <property type="term" value="C:NuA4 histone acetyltransferase complex"/>
    <property type="evidence" value="ECO:0000318"/>
    <property type="project" value="GO_Central"/>
</dbReference>
<dbReference type="GO" id="GO:0000812">
    <property type="term" value="C:Swr1 complex"/>
    <property type="evidence" value="ECO:0000318"/>
    <property type="project" value="GO_Central"/>
</dbReference>
<dbReference type="GO" id="GO:0003714">
    <property type="term" value="F:transcription corepressor activity"/>
    <property type="evidence" value="ECO:0000318"/>
    <property type="project" value="GO_Central"/>
</dbReference>
<dbReference type="GO" id="GO:0006338">
    <property type="term" value="P:chromatin remodeling"/>
    <property type="evidence" value="ECO:0007669"/>
    <property type="project" value="InterPro"/>
</dbReference>
<dbReference type="GO" id="GO:0006281">
    <property type="term" value="P:DNA repair"/>
    <property type="evidence" value="ECO:0007669"/>
    <property type="project" value="UniProtKB-KW"/>
</dbReference>
<dbReference type="GO" id="GO:0000122">
    <property type="term" value="P:negative regulation of transcription by RNA polymerase II"/>
    <property type="evidence" value="ECO:0000318"/>
    <property type="project" value="GO_Central"/>
</dbReference>
<dbReference type="FunFam" id="1.10.10.60:FF:000432">
    <property type="entry name" value="SWR1-complex protein 4"/>
    <property type="match status" value="1"/>
</dbReference>
<dbReference type="Gene3D" id="1.10.10.60">
    <property type="entry name" value="Homeodomain-like"/>
    <property type="match status" value="1"/>
</dbReference>
<dbReference type="InterPro" id="IPR032563">
    <property type="entry name" value="DAMP1_SANT-like"/>
</dbReference>
<dbReference type="InterPro" id="IPR027109">
    <property type="entry name" value="Swc4/Dmap1"/>
</dbReference>
<dbReference type="PANTHER" id="PTHR12855:SF10">
    <property type="entry name" value="DNA METHYLTRANSFERASE 1-ASSOCIATED PROTEIN 1"/>
    <property type="match status" value="1"/>
</dbReference>
<dbReference type="PANTHER" id="PTHR12855">
    <property type="entry name" value="DNA METHYLTRANSFERASE 1-ASSOCIATED PROTEIN 1 FAMILY MEMBER"/>
    <property type="match status" value="1"/>
</dbReference>
<dbReference type="Pfam" id="PF16282">
    <property type="entry name" value="SANT_DAMP1_like"/>
    <property type="match status" value="1"/>
</dbReference>
<gene>
    <name type="primary">crc-1</name>
    <name type="synonym">swc4</name>
    <name type="ORF">49D12.020</name>
    <name type="ORF">NCU04002</name>
</gene>
<protein>
    <recommendedName>
        <fullName>SWR1-complex protein 4</fullName>
    </recommendedName>
    <alternativeName>
        <fullName>Chromatin-remodeling complex protein 1</fullName>
    </alternativeName>
</protein>
<feature type="chain" id="PRO_0000076343" description="SWR1-complex protein 4">
    <location>
        <begin position="1"/>
        <end position="733"/>
    </location>
</feature>
<feature type="domain" description="SANT">
    <location>
        <begin position="146"/>
        <end position="217"/>
    </location>
</feature>
<feature type="region of interest" description="Disordered" evidence="3">
    <location>
        <begin position="1"/>
        <end position="34"/>
    </location>
</feature>
<feature type="region of interest" description="Disordered" evidence="3">
    <location>
        <begin position="98"/>
        <end position="128"/>
    </location>
</feature>
<feature type="region of interest" description="Disordered" evidence="3">
    <location>
        <begin position="371"/>
        <end position="488"/>
    </location>
</feature>
<feature type="region of interest" description="Disordered" evidence="3">
    <location>
        <begin position="564"/>
        <end position="733"/>
    </location>
</feature>
<feature type="coiled-coil region" evidence="2">
    <location>
        <begin position="247"/>
        <end position="299"/>
    </location>
</feature>
<feature type="compositionally biased region" description="Low complexity" evidence="3">
    <location>
        <begin position="371"/>
        <end position="384"/>
    </location>
</feature>
<feature type="compositionally biased region" description="Basic and acidic residues" evidence="3">
    <location>
        <begin position="387"/>
        <end position="423"/>
    </location>
</feature>
<feature type="compositionally biased region" description="Basic and acidic residues" evidence="3">
    <location>
        <begin position="463"/>
        <end position="484"/>
    </location>
</feature>
<feature type="compositionally biased region" description="Basic and acidic residues" evidence="3">
    <location>
        <begin position="564"/>
        <end position="589"/>
    </location>
</feature>
<feature type="compositionally biased region" description="Basic and acidic residues" evidence="3">
    <location>
        <begin position="610"/>
        <end position="653"/>
    </location>
</feature>
<feature type="compositionally biased region" description="Low complexity" evidence="3">
    <location>
        <begin position="699"/>
        <end position="710"/>
    </location>
</feature>
<comment type="function">
    <text evidence="1">Component of the SWR1 complex which mediates the ATP-dependent exchange of histone H2A for the H2A variant H2A.Z leading to transcriptional regulation of selected genes by chromatin remodeling. Component of the NuA4 histone acetyltransferase complex which is involved in transcriptional activation of selected genes principally by acetylation of nucleosomal histone H4 and H2A. The NuA4 complex is also involved in DNA repair (By similarity).</text>
</comment>
<comment type="subunit">
    <text evidence="1">Component of the SWR1 chromatin-remodeling complex and of the NuA4 histone acetyltransferase complex.</text>
</comment>
<comment type="subcellular location">
    <subcellularLocation>
        <location evidence="1">Nucleus</location>
    </subcellularLocation>
</comment>
<comment type="similarity">
    <text evidence="4">Belongs to the SWC4 family.</text>
</comment>
<comment type="sequence caution" evidence="4">
    <conflict type="erroneous gene model prediction">
        <sequence resource="EMBL-CDS" id="CAD79677"/>
    </conflict>
</comment>
<organism>
    <name type="scientific">Neurospora crassa (strain ATCC 24698 / 74-OR23-1A / CBS 708.71 / DSM 1257 / FGSC 987)</name>
    <dbReference type="NCBI Taxonomy" id="367110"/>
    <lineage>
        <taxon>Eukaryota</taxon>
        <taxon>Fungi</taxon>
        <taxon>Dikarya</taxon>
        <taxon>Ascomycota</taxon>
        <taxon>Pezizomycotina</taxon>
        <taxon>Sordariomycetes</taxon>
        <taxon>Sordariomycetidae</taxon>
        <taxon>Sordariales</taxon>
        <taxon>Sordariaceae</taxon>
        <taxon>Neurospora</taxon>
    </lineage>
</organism>
<name>SWC4_NEUCR</name>
<reference key="1">
    <citation type="journal article" date="2003" name="Nucleic Acids Res.">
        <title>What's in the genome of a filamentous fungus? Analysis of the Neurospora genome sequence.</title>
        <authorList>
            <person name="Mannhaupt G."/>
            <person name="Montrone C."/>
            <person name="Haase D."/>
            <person name="Mewes H.-W."/>
            <person name="Aign V."/>
            <person name="Hoheisel J.D."/>
            <person name="Fartmann B."/>
            <person name="Nyakatura G."/>
            <person name="Kempken F."/>
            <person name="Maier J."/>
            <person name="Schulte U."/>
        </authorList>
    </citation>
    <scope>NUCLEOTIDE SEQUENCE [LARGE SCALE GENOMIC DNA]</scope>
    <source>
        <strain>ATCC 24698 / 74-OR23-1A / CBS 708.71 / DSM 1257 / FGSC 987</strain>
    </source>
</reference>
<reference key="2">
    <citation type="journal article" date="2003" name="Nature">
        <title>The genome sequence of the filamentous fungus Neurospora crassa.</title>
        <authorList>
            <person name="Galagan J.E."/>
            <person name="Calvo S.E."/>
            <person name="Borkovich K.A."/>
            <person name="Selker E.U."/>
            <person name="Read N.D."/>
            <person name="Jaffe D.B."/>
            <person name="FitzHugh W."/>
            <person name="Ma L.-J."/>
            <person name="Smirnov S."/>
            <person name="Purcell S."/>
            <person name="Rehman B."/>
            <person name="Elkins T."/>
            <person name="Engels R."/>
            <person name="Wang S."/>
            <person name="Nielsen C.B."/>
            <person name="Butler J."/>
            <person name="Endrizzi M."/>
            <person name="Qui D."/>
            <person name="Ianakiev P."/>
            <person name="Bell-Pedersen D."/>
            <person name="Nelson M.A."/>
            <person name="Werner-Washburne M."/>
            <person name="Selitrennikoff C.P."/>
            <person name="Kinsey J.A."/>
            <person name="Braun E.L."/>
            <person name="Zelter A."/>
            <person name="Schulte U."/>
            <person name="Kothe G.O."/>
            <person name="Jedd G."/>
            <person name="Mewes H.-W."/>
            <person name="Staben C."/>
            <person name="Marcotte E."/>
            <person name="Greenberg D."/>
            <person name="Roy A."/>
            <person name="Foley K."/>
            <person name="Naylor J."/>
            <person name="Stange-Thomann N."/>
            <person name="Barrett R."/>
            <person name="Gnerre S."/>
            <person name="Kamal M."/>
            <person name="Kamvysselis M."/>
            <person name="Mauceli E.W."/>
            <person name="Bielke C."/>
            <person name="Rudd S."/>
            <person name="Frishman D."/>
            <person name="Krystofova S."/>
            <person name="Rasmussen C."/>
            <person name="Metzenberg R.L."/>
            <person name="Perkins D.D."/>
            <person name="Kroken S."/>
            <person name="Cogoni C."/>
            <person name="Macino G."/>
            <person name="Catcheside D.E.A."/>
            <person name="Li W."/>
            <person name="Pratt R.J."/>
            <person name="Osmani S.A."/>
            <person name="DeSouza C.P.C."/>
            <person name="Glass N.L."/>
            <person name="Orbach M.J."/>
            <person name="Berglund J.A."/>
            <person name="Voelker R."/>
            <person name="Yarden O."/>
            <person name="Plamann M."/>
            <person name="Seiler S."/>
            <person name="Dunlap J.C."/>
            <person name="Radford A."/>
            <person name="Aramayo R."/>
            <person name="Natvig D.O."/>
            <person name="Alex L.A."/>
            <person name="Mannhaupt G."/>
            <person name="Ebbole D.J."/>
            <person name="Freitag M."/>
            <person name="Paulsen I."/>
            <person name="Sachs M.S."/>
            <person name="Lander E.S."/>
            <person name="Nusbaum C."/>
            <person name="Birren B.W."/>
        </authorList>
    </citation>
    <scope>NUCLEOTIDE SEQUENCE [LARGE SCALE GENOMIC DNA]</scope>
    <source>
        <strain>ATCC 24698 / 74-OR23-1A / CBS 708.71 / DSM 1257 / FGSC 987</strain>
    </source>
</reference>
<accession>Q870Q1</accession>
<accession>Q1K621</accession>
<keyword id="KW-0010">Activator</keyword>
<keyword id="KW-0156">Chromatin regulator</keyword>
<keyword id="KW-0175">Coiled coil</keyword>
<keyword id="KW-0227">DNA damage</keyword>
<keyword id="KW-0234">DNA repair</keyword>
<keyword id="KW-0539">Nucleus</keyword>
<keyword id="KW-1185">Reference proteome</keyword>
<keyword id="KW-0804">Transcription</keyword>
<keyword id="KW-0805">Transcription regulation</keyword>
<proteinExistence type="inferred from homology"/>